<proteinExistence type="inferred from homology"/>
<evidence type="ECO:0000255" key="1">
    <source>
        <dbReference type="HAMAP-Rule" id="MF_00443"/>
    </source>
</evidence>
<reference key="1">
    <citation type="journal article" date="2003" name="Nat. Biotechnol.">
        <title>The genome sequence of the entomopathogenic bacterium Photorhabdus luminescens.</title>
        <authorList>
            <person name="Duchaud E."/>
            <person name="Rusniok C."/>
            <person name="Frangeul L."/>
            <person name="Buchrieser C."/>
            <person name="Givaudan A."/>
            <person name="Taourit S."/>
            <person name="Bocs S."/>
            <person name="Boursaux-Eude C."/>
            <person name="Chandler M."/>
            <person name="Charles J.-F."/>
            <person name="Dassa E."/>
            <person name="Derose R."/>
            <person name="Derzelle S."/>
            <person name="Freyssinet G."/>
            <person name="Gaudriault S."/>
            <person name="Medigue C."/>
            <person name="Lanois A."/>
            <person name="Powell K."/>
            <person name="Siguier P."/>
            <person name="Vincent R."/>
            <person name="Wingate V."/>
            <person name="Zouine M."/>
            <person name="Glaser P."/>
            <person name="Boemare N."/>
            <person name="Danchin A."/>
            <person name="Kunst F."/>
        </authorList>
    </citation>
    <scope>NUCLEOTIDE SEQUENCE [LARGE SCALE GENOMIC DNA]</scope>
    <source>
        <strain>DSM 15139 / CIP 105565 / TT01</strain>
    </source>
</reference>
<name>THIG_PHOLL</name>
<accession>Q7N966</accession>
<gene>
    <name evidence="1" type="primary">thiG</name>
    <name type="ordered locus">plu0482</name>
</gene>
<dbReference type="EC" id="2.8.1.10" evidence="1"/>
<dbReference type="EMBL" id="BX571860">
    <property type="protein sequence ID" value="CAE12777.1"/>
    <property type="molecule type" value="Genomic_DNA"/>
</dbReference>
<dbReference type="RefSeq" id="WP_011144867.1">
    <property type="nucleotide sequence ID" value="NC_005126.1"/>
</dbReference>
<dbReference type="SMR" id="Q7N966"/>
<dbReference type="STRING" id="243265.plu0482"/>
<dbReference type="GeneID" id="48846767"/>
<dbReference type="KEGG" id="plu:plu0482"/>
<dbReference type="eggNOG" id="COG2022">
    <property type="taxonomic scope" value="Bacteria"/>
</dbReference>
<dbReference type="HOGENOM" id="CLU_062233_1_0_6"/>
<dbReference type="OrthoDB" id="9805935at2"/>
<dbReference type="UniPathway" id="UPA00060"/>
<dbReference type="Proteomes" id="UP000002514">
    <property type="component" value="Chromosome"/>
</dbReference>
<dbReference type="GO" id="GO:0005737">
    <property type="term" value="C:cytoplasm"/>
    <property type="evidence" value="ECO:0007669"/>
    <property type="project" value="UniProtKB-SubCell"/>
</dbReference>
<dbReference type="GO" id="GO:1990107">
    <property type="term" value="F:thiazole synthase activity"/>
    <property type="evidence" value="ECO:0007669"/>
    <property type="project" value="UniProtKB-EC"/>
</dbReference>
<dbReference type="GO" id="GO:0009229">
    <property type="term" value="P:thiamine diphosphate biosynthetic process"/>
    <property type="evidence" value="ECO:0007669"/>
    <property type="project" value="UniProtKB-UniRule"/>
</dbReference>
<dbReference type="CDD" id="cd04728">
    <property type="entry name" value="ThiG"/>
    <property type="match status" value="1"/>
</dbReference>
<dbReference type="FunFam" id="3.20.20.70:FF:000049">
    <property type="entry name" value="Thiazole synthase"/>
    <property type="match status" value="1"/>
</dbReference>
<dbReference type="Gene3D" id="3.20.20.70">
    <property type="entry name" value="Aldolase class I"/>
    <property type="match status" value="1"/>
</dbReference>
<dbReference type="HAMAP" id="MF_00443">
    <property type="entry name" value="ThiG"/>
    <property type="match status" value="1"/>
</dbReference>
<dbReference type="InterPro" id="IPR013785">
    <property type="entry name" value="Aldolase_TIM"/>
</dbReference>
<dbReference type="InterPro" id="IPR033983">
    <property type="entry name" value="Thiazole_synthase_ThiG"/>
</dbReference>
<dbReference type="InterPro" id="IPR008867">
    <property type="entry name" value="ThiG"/>
</dbReference>
<dbReference type="PANTHER" id="PTHR34266">
    <property type="entry name" value="THIAZOLE SYNTHASE"/>
    <property type="match status" value="1"/>
</dbReference>
<dbReference type="PANTHER" id="PTHR34266:SF2">
    <property type="entry name" value="THIAZOLE SYNTHASE"/>
    <property type="match status" value="1"/>
</dbReference>
<dbReference type="Pfam" id="PF05690">
    <property type="entry name" value="ThiG"/>
    <property type="match status" value="1"/>
</dbReference>
<dbReference type="SUPFAM" id="SSF110399">
    <property type="entry name" value="ThiG-like"/>
    <property type="match status" value="1"/>
</dbReference>
<keyword id="KW-0963">Cytoplasm</keyword>
<keyword id="KW-1185">Reference proteome</keyword>
<keyword id="KW-0704">Schiff base</keyword>
<keyword id="KW-0784">Thiamine biosynthesis</keyword>
<keyword id="KW-0808">Transferase</keyword>
<feature type="chain" id="PRO_0000162838" description="Thiazole synthase">
    <location>
        <begin position="1"/>
        <end position="255"/>
    </location>
</feature>
<feature type="active site" description="Schiff-base intermediate with DXP" evidence="1">
    <location>
        <position position="95"/>
    </location>
</feature>
<feature type="binding site" evidence="1">
    <location>
        <position position="156"/>
    </location>
    <ligand>
        <name>1-deoxy-D-xylulose 5-phosphate</name>
        <dbReference type="ChEBI" id="CHEBI:57792"/>
    </ligand>
</feature>
<feature type="binding site" evidence="1">
    <location>
        <begin position="182"/>
        <end position="183"/>
    </location>
    <ligand>
        <name>1-deoxy-D-xylulose 5-phosphate</name>
        <dbReference type="ChEBI" id="CHEBI:57792"/>
    </ligand>
</feature>
<feature type="binding site" evidence="1">
    <location>
        <begin position="204"/>
        <end position="205"/>
    </location>
    <ligand>
        <name>1-deoxy-D-xylulose 5-phosphate</name>
        <dbReference type="ChEBI" id="CHEBI:57792"/>
    </ligand>
</feature>
<sequence>MLKIADTTFHSRLFTGTGKFANANLMTQAIAASGSQLVTMAMKRIDLQSGNDAILAPLQKLGVKLLPNTSGAKTAEEALFAARLAREALATNWIKLEIHPDVKYLLPDPIETLKGAEMLVKDGFVVLPYCSADPVLCKRLEEVGCAAVMPLGAPIGSNQGLLTRDFLQIIIEQAQVPVVIDAGIGAPSHALEALELGADAVLVNTAIAVARNPVKMAQAFRIAIEAGELSYQAGRASPKQHAVASSPLTDFLRVL</sequence>
<protein>
    <recommendedName>
        <fullName evidence="1">Thiazole synthase</fullName>
        <ecNumber evidence="1">2.8.1.10</ecNumber>
    </recommendedName>
</protein>
<organism>
    <name type="scientific">Photorhabdus laumondii subsp. laumondii (strain DSM 15139 / CIP 105565 / TT01)</name>
    <name type="common">Photorhabdus luminescens subsp. laumondii</name>
    <dbReference type="NCBI Taxonomy" id="243265"/>
    <lineage>
        <taxon>Bacteria</taxon>
        <taxon>Pseudomonadati</taxon>
        <taxon>Pseudomonadota</taxon>
        <taxon>Gammaproteobacteria</taxon>
        <taxon>Enterobacterales</taxon>
        <taxon>Morganellaceae</taxon>
        <taxon>Photorhabdus</taxon>
    </lineage>
</organism>
<comment type="function">
    <text evidence="1">Catalyzes the rearrangement of 1-deoxy-D-xylulose 5-phosphate (DXP) to produce the thiazole phosphate moiety of thiamine. Sulfur is provided by the thiocarboxylate moiety of the carrier protein ThiS. In vitro, sulfur can be provided by H(2)S.</text>
</comment>
<comment type="catalytic activity">
    <reaction evidence="1">
        <text>[ThiS sulfur-carrier protein]-C-terminal-Gly-aminoethanethioate + 2-iminoacetate + 1-deoxy-D-xylulose 5-phosphate = [ThiS sulfur-carrier protein]-C-terminal Gly-Gly + 2-[(2R,5Z)-2-carboxy-4-methylthiazol-5(2H)-ylidene]ethyl phosphate + 2 H2O + H(+)</text>
        <dbReference type="Rhea" id="RHEA:26297"/>
        <dbReference type="Rhea" id="RHEA-COMP:12909"/>
        <dbReference type="Rhea" id="RHEA-COMP:19908"/>
        <dbReference type="ChEBI" id="CHEBI:15377"/>
        <dbReference type="ChEBI" id="CHEBI:15378"/>
        <dbReference type="ChEBI" id="CHEBI:57792"/>
        <dbReference type="ChEBI" id="CHEBI:62899"/>
        <dbReference type="ChEBI" id="CHEBI:77846"/>
        <dbReference type="ChEBI" id="CHEBI:90778"/>
        <dbReference type="ChEBI" id="CHEBI:232372"/>
        <dbReference type="EC" id="2.8.1.10"/>
    </reaction>
</comment>
<comment type="pathway">
    <text evidence="1">Cofactor biosynthesis; thiamine diphosphate biosynthesis.</text>
</comment>
<comment type="subunit">
    <text evidence="1">Homotetramer. Forms heterodimers with either ThiH or ThiS.</text>
</comment>
<comment type="subcellular location">
    <subcellularLocation>
        <location evidence="1">Cytoplasm</location>
    </subcellularLocation>
</comment>
<comment type="similarity">
    <text evidence="1">Belongs to the ThiG family.</text>
</comment>